<reference key="1">
    <citation type="journal article" date="2008" name="J. Bacteriol.">
        <title>Comparative genome sequence analysis of multidrug-resistant Acinetobacter baumannii.</title>
        <authorList>
            <person name="Adams M.D."/>
            <person name="Goglin K."/>
            <person name="Molyneaux N."/>
            <person name="Hujer K.M."/>
            <person name="Lavender H."/>
            <person name="Jamison J.J."/>
            <person name="MacDonald I.J."/>
            <person name="Martin K.M."/>
            <person name="Russo T."/>
            <person name="Campagnari A.A."/>
            <person name="Hujer A.M."/>
            <person name="Bonomo R.A."/>
            <person name="Gill S.R."/>
        </authorList>
    </citation>
    <scope>NUCLEOTIDE SEQUENCE [LARGE SCALE GENOMIC DNA]</scope>
    <source>
        <strain>AB0057</strain>
    </source>
</reference>
<accession>B7IBC0</accession>
<organism>
    <name type="scientific">Acinetobacter baumannii (strain AB0057)</name>
    <dbReference type="NCBI Taxonomy" id="480119"/>
    <lineage>
        <taxon>Bacteria</taxon>
        <taxon>Pseudomonadati</taxon>
        <taxon>Pseudomonadota</taxon>
        <taxon>Gammaproteobacteria</taxon>
        <taxon>Moraxellales</taxon>
        <taxon>Moraxellaceae</taxon>
        <taxon>Acinetobacter</taxon>
        <taxon>Acinetobacter calcoaceticus/baumannii complex</taxon>
    </lineage>
</organism>
<feature type="chain" id="PRO_1000199632" description="Protoheme IX farnesyltransferase">
    <location>
        <begin position="1"/>
        <end position="292"/>
    </location>
</feature>
<feature type="transmembrane region" description="Helical" evidence="1">
    <location>
        <begin position="13"/>
        <end position="33"/>
    </location>
</feature>
<feature type="transmembrane region" description="Helical" evidence="1">
    <location>
        <begin position="35"/>
        <end position="55"/>
    </location>
</feature>
<feature type="transmembrane region" description="Helical" evidence="1">
    <location>
        <begin position="84"/>
        <end position="104"/>
    </location>
</feature>
<feature type="transmembrane region" description="Helical" evidence="1">
    <location>
        <begin position="106"/>
        <end position="126"/>
    </location>
</feature>
<feature type="transmembrane region" description="Helical" evidence="1">
    <location>
        <begin position="135"/>
        <end position="155"/>
    </location>
</feature>
<feature type="transmembrane region" description="Helical" evidence="1">
    <location>
        <begin position="161"/>
        <end position="181"/>
    </location>
</feature>
<feature type="transmembrane region" description="Helical" evidence="1">
    <location>
        <begin position="206"/>
        <end position="226"/>
    </location>
</feature>
<feature type="transmembrane region" description="Helical" evidence="1">
    <location>
        <begin position="231"/>
        <end position="251"/>
    </location>
</feature>
<feature type="transmembrane region" description="Helical" evidence="1">
    <location>
        <begin position="263"/>
        <end position="283"/>
    </location>
</feature>
<evidence type="ECO:0000255" key="1">
    <source>
        <dbReference type="HAMAP-Rule" id="MF_00154"/>
    </source>
</evidence>
<sequence>MLKKYLFLTKPGILFGNFITTLGGFFLAAQGSIDILLLLLTLIGTTLVVASGCVVNNVIDQDIDTKMQRTQNRALVKKTISPTVALVYAFVLGVMGFSILWFGVNGYAFLFAMIGFIVYVGFYSLWTKRTSIHQTVIGSISGASPPVIGYTAVTHQFDVAALLLFLAYALWQMPHSWAIAIYRFDDYKNAGIPILPVARSIYRTKIECVIYILLFAAVLNGLYCFGYTNVFFLITFNALTAYWFYLSIIGFKAENDQLWAKRFFLYSVILITLLSLSFSFTYQSPAPNLPLF</sequence>
<dbReference type="EC" id="2.5.1.141" evidence="1"/>
<dbReference type="EMBL" id="CP001182">
    <property type="protein sequence ID" value="ACJ42617.1"/>
    <property type="molecule type" value="Genomic_DNA"/>
</dbReference>
<dbReference type="RefSeq" id="WP_000915319.1">
    <property type="nucleotide sequence ID" value="NC_011586.2"/>
</dbReference>
<dbReference type="SMR" id="B7IBC0"/>
<dbReference type="KEGG" id="abn:AB57_2508"/>
<dbReference type="HOGENOM" id="CLU_029631_0_0_6"/>
<dbReference type="UniPathway" id="UPA00834">
    <property type="reaction ID" value="UER00712"/>
</dbReference>
<dbReference type="Proteomes" id="UP000007094">
    <property type="component" value="Chromosome"/>
</dbReference>
<dbReference type="GO" id="GO:0005886">
    <property type="term" value="C:plasma membrane"/>
    <property type="evidence" value="ECO:0007669"/>
    <property type="project" value="UniProtKB-SubCell"/>
</dbReference>
<dbReference type="GO" id="GO:0008495">
    <property type="term" value="F:protoheme IX farnesyltransferase activity"/>
    <property type="evidence" value="ECO:0007669"/>
    <property type="project" value="UniProtKB-UniRule"/>
</dbReference>
<dbReference type="GO" id="GO:0048034">
    <property type="term" value="P:heme O biosynthetic process"/>
    <property type="evidence" value="ECO:0007669"/>
    <property type="project" value="UniProtKB-UniRule"/>
</dbReference>
<dbReference type="CDD" id="cd13957">
    <property type="entry name" value="PT_UbiA_Cox10"/>
    <property type="match status" value="1"/>
</dbReference>
<dbReference type="FunFam" id="1.10.357.140:FF:000001">
    <property type="entry name" value="Protoheme IX farnesyltransferase"/>
    <property type="match status" value="1"/>
</dbReference>
<dbReference type="Gene3D" id="1.10.357.140">
    <property type="entry name" value="UbiA prenyltransferase"/>
    <property type="match status" value="1"/>
</dbReference>
<dbReference type="HAMAP" id="MF_00154">
    <property type="entry name" value="CyoE_CtaB"/>
    <property type="match status" value="1"/>
</dbReference>
<dbReference type="InterPro" id="IPR006369">
    <property type="entry name" value="Protohaem_IX_farnesylTrfase"/>
</dbReference>
<dbReference type="InterPro" id="IPR000537">
    <property type="entry name" value="UbiA_prenyltransferase"/>
</dbReference>
<dbReference type="InterPro" id="IPR030470">
    <property type="entry name" value="UbiA_prenylTrfase_CS"/>
</dbReference>
<dbReference type="InterPro" id="IPR044878">
    <property type="entry name" value="UbiA_sf"/>
</dbReference>
<dbReference type="NCBIfam" id="TIGR01473">
    <property type="entry name" value="cyoE_ctaB"/>
    <property type="match status" value="1"/>
</dbReference>
<dbReference type="NCBIfam" id="NF003348">
    <property type="entry name" value="PRK04375.1-1"/>
    <property type="match status" value="1"/>
</dbReference>
<dbReference type="PANTHER" id="PTHR43448">
    <property type="entry name" value="PROTOHEME IX FARNESYLTRANSFERASE, MITOCHONDRIAL"/>
    <property type="match status" value="1"/>
</dbReference>
<dbReference type="PANTHER" id="PTHR43448:SF2">
    <property type="entry name" value="PROTOHEME IX FARNESYLTRANSFERASE, MITOCHONDRIAL"/>
    <property type="match status" value="1"/>
</dbReference>
<dbReference type="Pfam" id="PF01040">
    <property type="entry name" value="UbiA"/>
    <property type="match status" value="1"/>
</dbReference>
<dbReference type="PROSITE" id="PS00943">
    <property type="entry name" value="UBIA"/>
    <property type="match status" value="1"/>
</dbReference>
<comment type="function">
    <text evidence="1">Converts heme B (protoheme IX) to heme O by substitution of the vinyl group on carbon 2 of heme B porphyrin ring with a hydroxyethyl farnesyl side group.</text>
</comment>
<comment type="catalytic activity">
    <reaction evidence="1">
        <text>heme b + (2E,6E)-farnesyl diphosphate + H2O = Fe(II)-heme o + diphosphate</text>
        <dbReference type="Rhea" id="RHEA:28070"/>
        <dbReference type="ChEBI" id="CHEBI:15377"/>
        <dbReference type="ChEBI" id="CHEBI:33019"/>
        <dbReference type="ChEBI" id="CHEBI:60344"/>
        <dbReference type="ChEBI" id="CHEBI:60530"/>
        <dbReference type="ChEBI" id="CHEBI:175763"/>
        <dbReference type="EC" id="2.5.1.141"/>
    </reaction>
</comment>
<comment type="pathway">
    <text evidence="1">Porphyrin-containing compound metabolism; heme O biosynthesis; heme O from protoheme: step 1/1.</text>
</comment>
<comment type="subcellular location">
    <subcellularLocation>
        <location evidence="1">Cell inner membrane</location>
        <topology evidence="1">Multi-pass membrane protein</topology>
    </subcellularLocation>
</comment>
<comment type="miscellaneous">
    <text evidence="1">Carbon 2 of the heme B porphyrin ring is defined according to the Fischer nomenclature.</text>
</comment>
<comment type="similarity">
    <text evidence="1">Belongs to the UbiA prenyltransferase family. Protoheme IX farnesyltransferase subfamily.</text>
</comment>
<protein>
    <recommendedName>
        <fullName evidence="1">Protoheme IX farnesyltransferase</fullName>
        <ecNumber evidence="1">2.5.1.141</ecNumber>
    </recommendedName>
    <alternativeName>
        <fullName evidence="1">Heme B farnesyltransferase</fullName>
    </alternativeName>
    <alternativeName>
        <fullName evidence="1">Heme O synthase</fullName>
    </alternativeName>
</protein>
<proteinExistence type="inferred from homology"/>
<keyword id="KW-0997">Cell inner membrane</keyword>
<keyword id="KW-1003">Cell membrane</keyword>
<keyword id="KW-0350">Heme biosynthesis</keyword>
<keyword id="KW-0472">Membrane</keyword>
<keyword id="KW-0808">Transferase</keyword>
<keyword id="KW-0812">Transmembrane</keyword>
<keyword id="KW-1133">Transmembrane helix</keyword>
<name>CYOE_ACIB5</name>
<gene>
    <name evidence="1" type="primary">cyoE</name>
    <name type="ordered locus">AB57_2508</name>
</gene>